<organism>
    <name type="scientific">Enterococcus hirae</name>
    <dbReference type="NCBI Taxonomy" id="1354"/>
    <lineage>
        <taxon>Bacteria</taxon>
        <taxon>Bacillati</taxon>
        <taxon>Bacillota</taxon>
        <taxon>Bacilli</taxon>
        <taxon>Lactobacillales</taxon>
        <taxon>Enterococcaceae</taxon>
        <taxon>Enterococcus</taxon>
    </lineage>
</organism>
<protein>
    <recommendedName>
        <fullName evidence="3">Probable peptidoglycan glycosyltransferase FtsW</fullName>
        <shortName evidence="3">PGT</shortName>
        <ecNumber evidence="3">2.4.99.28</ecNumber>
    </recommendedName>
    <alternativeName>
        <fullName evidence="2">Cell division protein FtsW</fullName>
    </alternativeName>
    <alternativeName>
        <fullName evidence="3">Cell wall polymerase</fullName>
    </alternativeName>
    <alternativeName>
        <fullName evidence="3">Peptidoglycan polymerase</fullName>
        <shortName evidence="3">PG polymerase</shortName>
    </alternativeName>
</protein>
<gene>
    <name type="primary">ftsW</name>
</gene>
<evidence type="ECO:0000250" key="1"/>
<evidence type="ECO:0000250" key="2">
    <source>
        <dbReference type="UniProtKB" id="O07639"/>
    </source>
</evidence>
<evidence type="ECO:0000250" key="3">
    <source>
        <dbReference type="UniProtKB" id="P39604"/>
    </source>
</evidence>
<evidence type="ECO:0000255" key="4"/>
<evidence type="ECO:0000305" key="5"/>
<keyword id="KW-0131">Cell cycle</keyword>
<keyword id="KW-0132">Cell division</keyword>
<keyword id="KW-1003">Cell membrane</keyword>
<keyword id="KW-0133">Cell shape</keyword>
<keyword id="KW-0961">Cell wall biogenesis/degradation</keyword>
<keyword id="KW-0328">Glycosyltransferase</keyword>
<keyword id="KW-0472">Membrane</keyword>
<keyword id="KW-0573">Peptidoglycan synthesis</keyword>
<keyword id="KW-0808">Transferase</keyword>
<keyword id="KW-0812">Transmembrane</keyword>
<keyword id="KW-1133">Transmembrane helix</keyword>
<accession>Q47866</accession>
<dbReference type="EC" id="2.4.99.28" evidence="3"/>
<dbReference type="EMBL" id="U58049">
    <property type="protein sequence ID" value="AAB39929.1"/>
    <property type="molecule type" value="Genomic_DNA"/>
</dbReference>
<dbReference type="RefSeq" id="WP_010737635.1">
    <property type="nucleotide sequence ID" value="NZ_VOEF01000005.1"/>
</dbReference>
<dbReference type="SMR" id="Q47866"/>
<dbReference type="STRING" id="1354.A6P53_06590"/>
<dbReference type="UniPathway" id="UPA00219"/>
<dbReference type="GO" id="GO:0032153">
    <property type="term" value="C:cell division site"/>
    <property type="evidence" value="ECO:0007669"/>
    <property type="project" value="TreeGrafter"/>
</dbReference>
<dbReference type="GO" id="GO:0005886">
    <property type="term" value="C:plasma membrane"/>
    <property type="evidence" value="ECO:0007669"/>
    <property type="project" value="UniProtKB-SubCell"/>
</dbReference>
<dbReference type="GO" id="GO:0015648">
    <property type="term" value="F:lipid-linked peptidoglycan transporter activity"/>
    <property type="evidence" value="ECO:0007669"/>
    <property type="project" value="TreeGrafter"/>
</dbReference>
<dbReference type="GO" id="GO:0008955">
    <property type="term" value="F:peptidoglycan glycosyltransferase activity"/>
    <property type="evidence" value="ECO:0007669"/>
    <property type="project" value="RHEA"/>
</dbReference>
<dbReference type="GO" id="GO:0051301">
    <property type="term" value="P:cell division"/>
    <property type="evidence" value="ECO:0007669"/>
    <property type="project" value="UniProtKB-KW"/>
</dbReference>
<dbReference type="GO" id="GO:0071555">
    <property type="term" value="P:cell wall organization"/>
    <property type="evidence" value="ECO:0007669"/>
    <property type="project" value="UniProtKB-KW"/>
</dbReference>
<dbReference type="GO" id="GO:0009252">
    <property type="term" value="P:peptidoglycan biosynthetic process"/>
    <property type="evidence" value="ECO:0007669"/>
    <property type="project" value="UniProtKB-UniPathway"/>
</dbReference>
<dbReference type="GO" id="GO:0008360">
    <property type="term" value="P:regulation of cell shape"/>
    <property type="evidence" value="ECO:0007669"/>
    <property type="project" value="UniProtKB-KW"/>
</dbReference>
<dbReference type="InterPro" id="IPR018365">
    <property type="entry name" value="Cell_cycle_FtsW-rel_CS"/>
</dbReference>
<dbReference type="InterPro" id="IPR001182">
    <property type="entry name" value="FtsW/RodA"/>
</dbReference>
<dbReference type="PANTHER" id="PTHR30474">
    <property type="entry name" value="CELL CYCLE PROTEIN"/>
    <property type="match status" value="1"/>
</dbReference>
<dbReference type="PANTHER" id="PTHR30474:SF2">
    <property type="entry name" value="PEPTIDOGLYCAN GLYCOSYLTRANSFERASE FTSW-RELATED"/>
    <property type="match status" value="1"/>
</dbReference>
<dbReference type="Pfam" id="PF01098">
    <property type="entry name" value="FTSW_RODA_SPOVE"/>
    <property type="match status" value="1"/>
</dbReference>
<dbReference type="PROSITE" id="PS00428">
    <property type="entry name" value="FTSW_RODA_SPOVE"/>
    <property type="match status" value="1"/>
</dbReference>
<name>FTSW_ENTHR</name>
<reference key="1">
    <citation type="submission" date="1996-07" db="EMBL/GenBank/DDBJ databases">
        <authorList>
            <person name="Massidda O."/>
            <person name="Daze C."/>
            <person name="Coyette J."/>
            <person name="Shockman G.D."/>
            <person name="Daneo-Moore L."/>
        </authorList>
    </citation>
    <scope>NUCLEOTIDE SEQUENCE [GENOMIC DNA]</scope>
    <source>
        <strain>R40</strain>
    </source>
</reference>
<sequence>MWKNRKIDWLILGPYLALSIVGLLEIYSASSYRLLVAGSDPKSLFIRQFLFIILSWGVIVLTYSIRLQVLLKPRIIKAGLIVSGLLLAMMKLGIFAVTVNGAQRWVSIAGIQFQPSEIATIFLILYLSRFFRNDRSVPEKLHIPVLIVGGIAVLVLFQPKIAGALMILAIAGAIFWAAAIPIKKGLIIIGAAIASLILVAGLVLLLEKHHLLPSFFEHAYDRIAMVHNPFLDEHGAGYQMSNSYYALYNGGLFGRGMGNSITKKGYLPESETDFIFSVIAEEFGLIGALLVLFLLFLLCMRIFQKSTKQKNQQANLILIGVGTWILVQTSINIGSILGLIPMTGVPLPFVSYGGTSYLILSFAIGLALNISSRQVKEKNKQVERLQLKKPKLLNKNN</sequence>
<feature type="chain" id="PRO_0000062703" description="Probable peptidoglycan glycosyltransferase FtsW">
    <location>
        <begin position="1"/>
        <end position="397"/>
    </location>
</feature>
<feature type="topological domain" description="Cytoplasmic" evidence="4">
    <location>
        <begin position="1"/>
        <end position="6"/>
    </location>
</feature>
<feature type="transmembrane region" description="Helical" evidence="4">
    <location>
        <begin position="7"/>
        <end position="27"/>
    </location>
</feature>
<feature type="topological domain" description="Extracellular" evidence="4">
    <location>
        <begin position="28"/>
        <end position="44"/>
    </location>
</feature>
<feature type="transmembrane region" description="Helical" evidence="4">
    <location>
        <begin position="45"/>
        <end position="65"/>
    </location>
</feature>
<feature type="topological domain" description="Cytoplasmic" evidence="4">
    <location>
        <begin position="66"/>
        <end position="78"/>
    </location>
</feature>
<feature type="transmembrane region" description="Helical" evidence="4">
    <location>
        <begin position="79"/>
        <end position="99"/>
    </location>
</feature>
<feature type="topological domain" description="Extracellular" evidence="4">
    <location>
        <begin position="100"/>
        <end position="104"/>
    </location>
</feature>
<feature type="transmembrane region" description="Helical" evidence="4">
    <location>
        <begin position="105"/>
        <end position="125"/>
    </location>
</feature>
<feature type="topological domain" description="Cytoplasmic" evidence="4">
    <location>
        <begin position="126"/>
        <end position="136"/>
    </location>
</feature>
<feature type="transmembrane region" description="Helical" evidence="4">
    <location>
        <begin position="137"/>
        <end position="157"/>
    </location>
</feature>
<feature type="topological domain" description="Extracellular" evidence="4">
    <location>
        <begin position="158"/>
        <end position="160"/>
    </location>
</feature>
<feature type="transmembrane region" description="Helical" evidence="4">
    <location>
        <begin position="161"/>
        <end position="181"/>
    </location>
</feature>
<feature type="topological domain" description="Cytoplasmic" evidence="4">
    <location>
        <begin position="182"/>
        <end position="185"/>
    </location>
</feature>
<feature type="transmembrane region" description="Helical" evidence="4">
    <location>
        <begin position="186"/>
        <end position="206"/>
    </location>
</feature>
<feature type="topological domain" description="Extracellular" evidence="4">
    <location>
        <begin position="207"/>
        <end position="277"/>
    </location>
</feature>
<feature type="transmembrane region" description="Helical" evidence="4">
    <location>
        <begin position="278"/>
        <end position="298"/>
    </location>
</feature>
<feature type="topological domain" description="Cytoplasmic" evidence="4">
    <location>
        <begin position="299"/>
        <end position="315"/>
    </location>
</feature>
<feature type="transmembrane region" description="Helical" evidence="4">
    <location>
        <begin position="316"/>
        <end position="336"/>
    </location>
</feature>
<feature type="topological domain" description="Extracellular" evidence="4">
    <location>
        <begin position="337"/>
        <end position="346"/>
    </location>
</feature>
<feature type="transmembrane region" description="Helical" evidence="4">
    <location>
        <begin position="347"/>
        <end position="367"/>
    </location>
</feature>
<feature type="topological domain" description="Cytoplasmic" evidence="4">
    <location>
        <begin position="368"/>
        <end position="397"/>
    </location>
</feature>
<comment type="function">
    <text evidence="3">Peptidoglycan polymerase that is essential for cell division.</text>
</comment>
<comment type="catalytic activity">
    <reaction evidence="3">
        <text>[GlcNAc-(1-&gt;4)-Mur2Ac(oyl-L-Ala-gamma-D-Glu-L-Lys-D-Ala-D-Ala)](n)-di-trans,octa-cis-undecaprenyl diphosphate + beta-D-GlcNAc-(1-&gt;4)-Mur2Ac(oyl-L-Ala-gamma-D-Glu-L-Lys-D-Ala-D-Ala)-di-trans,octa-cis-undecaprenyl diphosphate = [GlcNAc-(1-&gt;4)-Mur2Ac(oyl-L-Ala-gamma-D-Glu-L-Lys-D-Ala-D-Ala)](n+1)-di-trans,octa-cis-undecaprenyl diphosphate + di-trans,octa-cis-undecaprenyl diphosphate + H(+)</text>
        <dbReference type="Rhea" id="RHEA:23708"/>
        <dbReference type="Rhea" id="RHEA-COMP:9602"/>
        <dbReference type="Rhea" id="RHEA-COMP:9603"/>
        <dbReference type="ChEBI" id="CHEBI:15378"/>
        <dbReference type="ChEBI" id="CHEBI:58405"/>
        <dbReference type="ChEBI" id="CHEBI:60033"/>
        <dbReference type="ChEBI" id="CHEBI:78435"/>
        <dbReference type="EC" id="2.4.99.28"/>
    </reaction>
</comment>
<comment type="pathway">
    <text evidence="3">Cell wall biogenesis; peptidoglycan biosynthesis.</text>
</comment>
<comment type="subcellular location">
    <subcellularLocation>
        <location evidence="1">Cell membrane</location>
        <topology evidence="4">Multi-pass membrane protein</topology>
    </subcellularLocation>
    <text evidence="1">Localizes to the division septum.</text>
</comment>
<comment type="similarity">
    <text evidence="5">Belongs to the SEDS family. FtsW subfamily.</text>
</comment>
<proteinExistence type="inferred from homology"/>